<organism>
    <name type="scientific">Bos taurus</name>
    <name type="common">Bovine</name>
    <dbReference type="NCBI Taxonomy" id="9913"/>
    <lineage>
        <taxon>Eukaryota</taxon>
        <taxon>Metazoa</taxon>
        <taxon>Chordata</taxon>
        <taxon>Craniata</taxon>
        <taxon>Vertebrata</taxon>
        <taxon>Euteleostomi</taxon>
        <taxon>Mammalia</taxon>
        <taxon>Eutheria</taxon>
        <taxon>Laurasiatheria</taxon>
        <taxon>Artiodactyla</taxon>
        <taxon>Ruminantia</taxon>
        <taxon>Pecora</taxon>
        <taxon>Bovidae</taxon>
        <taxon>Bovinae</taxon>
        <taxon>Bos</taxon>
    </lineage>
</organism>
<gene>
    <name type="primary">TMEM38B</name>
</gene>
<proteinExistence type="evidence at transcript level"/>
<protein>
    <recommendedName>
        <fullName>Trimeric intracellular cation channel type B</fullName>
        <shortName>TRIC-B</shortName>
        <shortName>TRICB</shortName>
    </recommendedName>
    <alternativeName>
        <fullName>Transmembrane protein 38B</fullName>
    </alternativeName>
</protein>
<reference key="1">
    <citation type="submission" date="2006-08" db="EMBL/GenBank/DDBJ databases">
        <authorList>
            <consortium name="NIH - Mammalian Gene Collection (MGC) project"/>
        </authorList>
    </citation>
    <scope>NUCLEOTIDE SEQUENCE [LARGE SCALE MRNA]</scope>
    <source>
        <strain>Hereford</strain>
        <tissue>Brain cortex</tissue>
    </source>
</reference>
<comment type="function">
    <text evidence="1">Intracellular monovalent cation channel required for maintenance of rapid intracellular calcium release. Acts as a potassium counter-ion channel that functions in synchronization with calcium release from intracellular stores. Activated by increased cytosolic Ca(2+) levels.</text>
</comment>
<comment type="catalytic activity">
    <reaction evidence="1">
        <text>K(+)(in) = K(+)(out)</text>
        <dbReference type="Rhea" id="RHEA:29463"/>
        <dbReference type="ChEBI" id="CHEBI:29103"/>
    </reaction>
</comment>
<comment type="activity regulation">
    <text evidence="1">Channel activity is activated by increased cytosolic Ca(2+) levels and blocked by luminal high Ca(2+) levels.</text>
</comment>
<comment type="subunit">
    <text evidence="1">Homotrimer; conformation seems to be controled by binding to diacylglycerol (DAG).</text>
</comment>
<comment type="subcellular location">
    <subcellularLocation>
        <location evidence="2">Endoplasmic reticulum membrane</location>
        <topology evidence="2">Multi-pass membrane protein</topology>
    </subcellularLocation>
</comment>
<comment type="similarity">
    <text evidence="7">Belongs to the TMEM38 family.</text>
</comment>
<evidence type="ECO:0000250" key="1">
    <source>
        <dbReference type="UniProtKB" id="Q6GN30"/>
    </source>
</evidence>
<evidence type="ECO:0000250" key="2">
    <source>
        <dbReference type="UniProtKB" id="Q9DAV9"/>
    </source>
</evidence>
<evidence type="ECO:0000250" key="3">
    <source>
        <dbReference type="UniProtKB" id="Q9NA73"/>
    </source>
</evidence>
<evidence type="ECO:0000250" key="4">
    <source>
        <dbReference type="UniProtKB" id="Q9NVV0"/>
    </source>
</evidence>
<evidence type="ECO:0000255" key="5"/>
<evidence type="ECO:0000256" key="6">
    <source>
        <dbReference type="SAM" id="MobiDB-lite"/>
    </source>
</evidence>
<evidence type="ECO:0000305" key="7"/>
<name>TM38B_BOVIN</name>
<dbReference type="EMBL" id="BC120345">
    <property type="protein sequence ID" value="AAI20346.1"/>
    <property type="molecule type" value="mRNA"/>
</dbReference>
<dbReference type="RefSeq" id="NP_001069855.1">
    <property type="nucleotide sequence ID" value="NM_001076387.1"/>
</dbReference>
<dbReference type="SMR" id="Q0VC58"/>
<dbReference type="FunCoup" id="Q0VC58">
    <property type="interactions" value="1000"/>
</dbReference>
<dbReference type="STRING" id="9913.ENSBTAP00000005404"/>
<dbReference type="PaxDb" id="9913-ENSBTAP00000005404"/>
<dbReference type="Ensembl" id="ENSBTAT00000005404.4">
    <property type="protein sequence ID" value="ENSBTAP00000005404.3"/>
    <property type="gene ID" value="ENSBTAG00000034867.3"/>
</dbReference>
<dbReference type="GeneID" id="615646"/>
<dbReference type="KEGG" id="bta:615646"/>
<dbReference type="CTD" id="55151"/>
<dbReference type="VEuPathDB" id="HostDB:ENSBTAG00000034867"/>
<dbReference type="VGNC" id="VGNC:36081">
    <property type="gene designation" value="TMEM38B"/>
</dbReference>
<dbReference type="eggNOG" id="KOG3944">
    <property type="taxonomic scope" value="Eukaryota"/>
</dbReference>
<dbReference type="GeneTree" id="ENSGT00390000018845"/>
<dbReference type="HOGENOM" id="CLU_076376_0_0_1"/>
<dbReference type="InParanoid" id="Q0VC58"/>
<dbReference type="OMA" id="HNELLRP"/>
<dbReference type="OrthoDB" id="195817at2759"/>
<dbReference type="TreeFam" id="TF313483"/>
<dbReference type="Proteomes" id="UP000009136">
    <property type="component" value="Chromosome 8"/>
</dbReference>
<dbReference type="Bgee" id="ENSBTAG00000034867">
    <property type="expression patterns" value="Expressed in biceps femoris and 108 other cell types or tissues"/>
</dbReference>
<dbReference type="GO" id="GO:0005783">
    <property type="term" value="C:endoplasmic reticulum"/>
    <property type="evidence" value="ECO:0000250"/>
    <property type="project" value="UniProtKB"/>
</dbReference>
<dbReference type="GO" id="GO:0005789">
    <property type="term" value="C:endoplasmic reticulum membrane"/>
    <property type="evidence" value="ECO:0007669"/>
    <property type="project" value="UniProtKB-SubCell"/>
</dbReference>
<dbReference type="GO" id="GO:0042802">
    <property type="term" value="F:identical protein binding"/>
    <property type="evidence" value="ECO:0007669"/>
    <property type="project" value="InterPro"/>
</dbReference>
<dbReference type="GO" id="GO:0005267">
    <property type="term" value="F:potassium channel activity"/>
    <property type="evidence" value="ECO:0000250"/>
    <property type="project" value="UniProtKB"/>
</dbReference>
<dbReference type="GO" id="GO:0060348">
    <property type="term" value="P:bone development"/>
    <property type="evidence" value="ECO:0007669"/>
    <property type="project" value="Ensembl"/>
</dbReference>
<dbReference type="GO" id="GO:0030282">
    <property type="term" value="P:bone mineralization"/>
    <property type="evidence" value="ECO:0007669"/>
    <property type="project" value="Ensembl"/>
</dbReference>
<dbReference type="GO" id="GO:0071313">
    <property type="term" value="P:cellular response to caffeine"/>
    <property type="evidence" value="ECO:0007669"/>
    <property type="project" value="Ensembl"/>
</dbReference>
<dbReference type="GO" id="GO:0007029">
    <property type="term" value="P:endoplasmic reticulum organization"/>
    <property type="evidence" value="ECO:0007669"/>
    <property type="project" value="Ensembl"/>
</dbReference>
<dbReference type="GO" id="GO:0051649">
    <property type="term" value="P:establishment of localization in cell"/>
    <property type="evidence" value="ECO:0007669"/>
    <property type="project" value="Ensembl"/>
</dbReference>
<dbReference type="GO" id="GO:0070278">
    <property type="term" value="P:extracellular matrix constituent secretion"/>
    <property type="evidence" value="ECO:0007669"/>
    <property type="project" value="Ensembl"/>
</dbReference>
<dbReference type="GO" id="GO:0048286">
    <property type="term" value="P:lung alveolus development"/>
    <property type="evidence" value="ECO:0007669"/>
    <property type="project" value="Ensembl"/>
</dbReference>
<dbReference type="GO" id="GO:0060487">
    <property type="term" value="P:lung epithelial cell differentiation"/>
    <property type="evidence" value="ECO:0007669"/>
    <property type="project" value="Ensembl"/>
</dbReference>
<dbReference type="GO" id="GO:0008654">
    <property type="term" value="P:phospholipid biosynthetic process"/>
    <property type="evidence" value="ECO:0007669"/>
    <property type="project" value="Ensembl"/>
</dbReference>
<dbReference type="GO" id="GO:0010881">
    <property type="term" value="P:regulation of cardiac muscle contraction by regulation of the release of sequestered calcium ion"/>
    <property type="evidence" value="ECO:0007669"/>
    <property type="project" value="Ensembl"/>
</dbReference>
<dbReference type="GO" id="GO:0051279">
    <property type="term" value="P:regulation of release of sequestered calcium ion into cytosol"/>
    <property type="evidence" value="ECO:0000250"/>
    <property type="project" value="UniProtKB"/>
</dbReference>
<dbReference type="GO" id="GO:0014808">
    <property type="term" value="P:release of sequestered calcium ion into cytosol by sarcoplasmic reticulum"/>
    <property type="evidence" value="ECO:0007669"/>
    <property type="project" value="Ensembl"/>
</dbReference>
<dbReference type="GO" id="GO:0061033">
    <property type="term" value="P:secretion by lung epithelial cell involved in lung growth"/>
    <property type="evidence" value="ECO:0007669"/>
    <property type="project" value="Ensembl"/>
</dbReference>
<dbReference type="InterPro" id="IPR007866">
    <property type="entry name" value="TRIC_channel"/>
</dbReference>
<dbReference type="PANTHER" id="PTHR12454">
    <property type="entry name" value="TRIMERIC INTRACELLULAR CATION CHANNEL"/>
    <property type="match status" value="1"/>
</dbReference>
<dbReference type="PANTHER" id="PTHR12454:SF5">
    <property type="entry name" value="TRIMERIC INTRACELLULAR CATION CHANNEL TYPE B"/>
    <property type="match status" value="1"/>
</dbReference>
<dbReference type="Pfam" id="PF05197">
    <property type="entry name" value="TRIC"/>
    <property type="match status" value="1"/>
</dbReference>
<sequence>MESPWNELTLAFSRTSMFPFFDIAHYLVSVMALKHQPGAAALAWKNPLSSWFTAMLHCFGGGILSCVLLAEPPLRFLANNTNILLASSIWYIAFFCPCDLISQAYSFLPVQLLAAGMKEVTRTWKIVGGVTHANSYYKNGWIVMIAVGWARGAGGSIITNFEQLVKGCWKPEAEEWLKMSYPAKVTLLGSVIFTFQQTKYLAISKHNLMFLFTVFLVATKITMMITKTALVPFACFEDTLSRMLFGWQQQFSPCEKKSETKSSFNGTGSSTSKPVANASDKVKKKHSKKTE</sequence>
<feature type="chain" id="PRO_0000291523" description="Trimeric intracellular cation channel type B">
    <location>
        <begin position="1"/>
        <end position="291"/>
    </location>
</feature>
<feature type="topological domain" description="Lumenal" evidence="7">
    <location>
        <begin position="1"/>
        <end position="15"/>
    </location>
</feature>
<feature type="transmembrane region" description="Helical;Name=1" evidence="5">
    <location>
        <begin position="16"/>
        <end position="33"/>
    </location>
</feature>
<feature type="topological domain" description="Cytoplasmic" evidence="7">
    <location>
        <begin position="34"/>
        <end position="47"/>
    </location>
</feature>
<feature type="transmembrane region" description="Helical;Name=2" evidence="5">
    <location>
        <begin position="48"/>
        <end position="69"/>
    </location>
</feature>
<feature type="topological domain" description="Lumenal" evidence="7">
    <location>
        <begin position="70"/>
        <end position="80"/>
    </location>
</feature>
<feature type="transmembrane region" description="Helical;Name=3" evidence="5">
    <location>
        <begin position="81"/>
        <end position="100"/>
    </location>
</feature>
<feature type="topological domain" description="Cytoplasmic" evidence="7">
    <location>
        <begin position="101"/>
        <end position="103"/>
    </location>
</feature>
<feature type="transmembrane region" description="Helical;Name=4" evidence="5">
    <location>
        <begin position="104"/>
        <end position="122"/>
    </location>
</feature>
<feature type="topological domain" description="Lumenal" evidence="7">
    <location>
        <begin position="123"/>
        <end position="138"/>
    </location>
</feature>
<feature type="transmembrane region" description="Helical;Name=5" evidence="5">
    <location>
        <begin position="139"/>
        <end position="156"/>
    </location>
</feature>
<feature type="topological domain" description="Cytoplasmic" evidence="7">
    <location>
        <begin position="157"/>
        <end position="179"/>
    </location>
</feature>
<feature type="transmembrane region" description="Helical;Name=6" evidence="5">
    <location>
        <begin position="180"/>
        <end position="196"/>
    </location>
</feature>
<feature type="topological domain" description="Lumenal" evidence="7">
    <location>
        <begin position="197"/>
        <end position="207"/>
    </location>
</feature>
<feature type="transmembrane region" description="Helical;Name=7" evidence="5">
    <location>
        <begin position="208"/>
        <end position="225"/>
    </location>
</feature>
<feature type="topological domain" description="Cytoplasmic" evidence="7">
    <location>
        <begin position="226"/>
        <end position="291"/>
    </location>
</feature>
<feature type="region of interest" description="Disordered" evidence="6">
    <location>
        <begin position="257"/>
        <end position="291"/>
    </location>
</feature>
<feature type="compositionally biased region" description="Polar residues" evidence="6">
    <location>
        <begin position="261"/>
        <end position="274"/>
    </location>
</feature>
<feature type="compositionally biased region" description="Basic residues" evidence="6">
    <location>
        <begin position="282"/>
        <end position="291"/>
    </location>
</feature>
<feature type="binding site" evidence="3">
    <location>
        <position position="118"/>
    </location>
    <ligand>
        <name>a 1,2-diacyl-sn-glycero-3-phospho-(1D-myo-inositol-4,5-bisphosphate)</name>
        <dbReference type="ChEBI" id="CHEBI:58456"/>
    </ligand>
</feature>
<feature type="binding site" evidence="3">
    <location>
        <position position="122"/>
    </location>
    <ligand>
        <name>a 1,2-diacyl-sn-glycero-3-phospho-(1D-myo-inositol-4,5-bisphosphate)</name>
        <dbReference type="ChEBI" id="CHEBI:58456"/>
    </ligand>
</feature>
<feature type="modified residue" description="Phosphoserine" evidence="4">
    <location>
        <position position="262"/>
    </location>
</feature>
<accession>Q0VC58</accession>
<keyword id="KW-0256">Endoplasmic reticulum</keyword>
<keyword id="KW-0407">Ion channel</keyword>
<keyword id="KW-0406">Ion transport</keyword>
<keyword id="KW-0472">Membrane</keyword>
<keyword id="KW-0597">Phosphoprotein</keyword>
<keyword id="KW-0630">Potassium</keyword>
<keyword id="KW-0631">Potassium channel</keyword>
<keyword id="KW-0633">Potassium transport</keyword>
<keyword id="KW-1185">Reference proteome</keyword>
<keyword id="KW-0812">Transmembrane</keyword>
<keyword id="KW-1133">Transmembrane helix</keyword>
<keyword id="KW-0813">Transport</keyword>